<protein>
    <recommendedName>
        <fullName evidence="1">Bifunctional protein FolD</fullName>
    </recommendedName>
    <domain>
        <recommendedName>
            <fullName evidence="1">Methylenetetrahydrofolate dehydrogenase</fullName>
            <ecNumber evidence="1">1.5.1.5</ecNumber>
        </recommendedName>
    </domain>
    <domain>
        <recommendedName>
            <fullName evidence="1">Methenyltetrahydrofolate cyclohydrolase</fullName>
            <ecNumber evidence="1">3.5.4.9</ecNumber>
        </recommendedName>
    </domain>
</protein>
<gene>
    <name evidence="1" type="primary">folD</name>
    <name type="ordered locus">DNO_1298</name>
</gene>
<accession>A5EX57</accession>
<organism>
    <name type="scientific">Dichelobacter nodosus (strain VCS1703A)</name>
    <dbReference type="NCBI Taxonomy" id="246195"/>
    <lineage>
        <taxon>Bacteria</taxon>
        <taxon>Pseudomonadati</taxon>
        <taxon>Pseudomonadota</taxon>
        <taxon>Gammaproteobacteria</taxon>
        <taxon>Cardiobacteriales</taxon>
        <taxon>Cardiobacteriaceae</taxon>
        <taxon>Dichelobacter</taxon>
    </lineage>
</organism>
<feature type="chain" id="PRO_0000305812" description="Bifunctional protein FolD">
    <location>
        <begin position="1"/>
        <end position="291"/>
    </location>
</feature>
<feature type="binding site" evidence="1">
    <location>
        <begin position="167"/>
        <end position="169"/>
    </location>
    <ligand>
        <name>NADP(+)</name>
        <dbReference type="ChEBI" id="CHEBI:58349"/>
    </ligand>
</feature>
<feature type="binding site" evidence="1">
    <location>
        <position position="192"/>
    </location>
    <ligand>
        <name>NADP(+)</name>
        <dbReference type="ChEBI" id="CHEBI:58349"/>
    </ligand>
</feature>
<feature type="binding site" evidence="1">
    <location>
        <position position="233"/>
    </location>
    <ligand>
        <name>NADP(+)</name>
        <dbReference type="ChEBI" id="CHEBI:58349"/>
    </ligand>
</feature>
<comment type="function">
    <text evidence="1">Catalyzes the oxidation of 5,10-methylenetetrahydrofolate to 5,10-methenyltetrahydrofolate and then the hydrolysis of 5,10-methenyltetrahydrofolate to 10-formyltetrahydrofolate.</text>
</comment>
<comment type="catalytic activity">
    <reaction evidence="1">
        <text>(6R)-5,10-methylene-5,6,7,8-tetrahydrofolate + NADP(+) = (6R)-5,10-methenyltetrahydrofolate + NADPH</text>
        <dbReference type="Rhea" id="RHEA:22812"/>
        <dbReference type="ChEBI" id="CHEBI:15636"/>
        <dbReference type="ChEBI" id="CHEBI:57455"/>
        <dbReference type="ChEBI" id="CHEBI:57783"/>
        <dbReference type="ChEBI" id="CHEBI:58349"/>
        <dbReference type="EC" id="1.5.1.5"/>
    </reaction>
</comment>
<comment type="catalytic activity">
    <reaction evidence="1">
        <text>(6R)-5,10-methenyltetrahydrofolate + H2O = (6R)-10-formyltetrahydrofolate + H(+)</text>
        <dbReference type="Rhea" id="RHEA:23700"/>
        <dbReference type="ChEBI" id="CHEBI:15377"/>
        <dbReference type="ChEBI" id="CHEBI:15378"/>
        <dbReference type="ChEBI" id="CHEBI:57455"/>
        <dbReference type="ChEBI" id="CHEBI:195366"/>
        <dbReference type="EC" id="3.5.4.9"/>
    </reaction>
</comment>
<comment type="pathway">
    <text evidence="1">One-carbon metabolism; tetrahydrofolate interconversion.</text>
</comment>
<comment type="subunit">
    <text evidence="1">Homodimer.</text>
</comment>
<comment type="similarity">
    <text evidence="1">Belongs to the tetrahydrofolate dehydrogenase/cyclohydrolase family.</text>
</comment>
<keyword id="KW-0028">Amino-acid biosynthesis</keyword>
<keyword id="KW-0368">Histidine biosynthesis</keyword>
<keyword id="KW-0378">Hydrolase</keyword>
<keyword id="KW-0486">Methionine biosynthesis</keyword>
<keyword id="KW-0511">Multifunctional enzyme</keyword>
<keyword id="KW-0521">NADP</keyword>
<keyword id="KW-0554">One-carbon metabolism</keyword>
<keyword id="KW-0560">Oxidoreductase</keyword>
<keyword id="KW-0658">Purine biosynthesis</keyword>
<keyword id="KW-1185">Reference proteome</keyword>
<proteinExistence type="inferred from homology"/>
<dbReference type="EC" id="1.5.1.5" evidence="1"/>
<dbReference type="EC" id="3.5.4.9" evidence="1"/>
<dbReference type="EMBL" id="CP000513">
    <property type="protein sequence ID" value="ABQ14210.1"/>
    <property type="molecule type" value="Genomic_DNA"/>
</dbReference>
<dbReference type="RefSeq" id="WP_012031588.1">
    <property type="nucleotide sequence ID" value="NC_009446.1"/>
</dbReference>
<dbReference type="SMR" id="A5EX57"/>
<dbReference type="STRING" id="246195.DNO_1298"/>
<dbReference type="KEGG" id="dno:DNO_1298"/>
<dbReference type="eggNOG" id="COG0190">
    <property type="taxonomic scope" value="Bacteria"/>
</dbReference>
<dbReference type="HOGENOM" id="CLU_034045_2_1_6"/>
<dbReference type="OrthoDB" id="9803580at2"/>
<dbReference type="UniPathway" id="UPA00193"/>
<dbReference type="Proteomes" id="UP000000248">
    <property type="component" value="Chromosome"/>
</dbReference>
<dbReference type="GO" id="GO:0005829">
    <property type="term" value="C:cytosol"/>
    <property type="evidence" value="ECO:0007669"/>
    <property type="project" value="TreeGrafter"/>
</dbReference>
<dbReference type="GO" id="GO:0004477">
    <property type="term" value="F:methenyltetrahydrofolate cyclohydrolase activity"/>
    <property type="evidence" value="ECO:0007669"/>
    <property type="project" value="UniProtKB-UniRule"/>
</dbReference>
<dbReference type="GO" id="GO:0004488">
    <property type="term" value="F:methylenetetrahydrofolate dehydrogenase (NADP+) activity"/>
    <property type="evidence" value="ECO:0007669"/>
    <property type="project" value="UniProtKB-UniRule"/>
</dbReference>
<dbReference type="GO" id="GO:0000105">
    <property type="term" value="P:L-histidine biosynthetic process"/>
    <property type="evidence" value="ECO:0007669"/>
    <property type="project" value="UniProtKB-KW"/>
</dbReference>
<dbReference type="GO" id="GO:0009086">
    <property type="term" value="P:methionine biosynthetic process"/>
    <property type="evidence" value="ECO:0007669"/>
    <property type="project" value="UniProtKB-KW"/>
</dbReference>
<dbReference type="GO" id="GO:0006164">
    <property type="term" value="P:purine nucleotide biosynthetic process"/>
    <property type="evidence" value="ECO:0007669"/>
    <property type="project" value="UniProtKB-KW"/>
</dbReference>
<dbReference type="GO" id="GO:0035999">
    <property type="term" value="P:tetrahydrofolate interconversion"/>
    <property type="evidence" value="ECO:0007669"/>
    <property type="project" value="UniProtKB-UniRule"/>
</dbReference>
<dbReference type="CDD" id="cd01080">
    <property type="entry name" value="NAD_bind_m-THF_DH_Cyclohyd"/>
    <property type="match status" value="1"/>
</dbReference>
<dbReference type="FunFam" id="3.40.50.720:FF:000006">
    <property type="entry name" value="Bifunctional protein FolD"/>
    <property type="match status" value="1"/>
</dbReference>
<dbReference type="FunFam" id="3.40.50.10860:FF:000005">
    <property type="entry name" value="C-1-tetrahydrofolate synthase, cytoplasmic, putative"/>
    <property type="match status" value="1"/>
</dbReference>
<dbReference type="Gene3D" id="3.40.50.10860">
    <property type="entry name" value="Leucine Dehydrogenase, chain A, domain 1"/>
    <property type="match status" value="1"/>
</dbReference>
<dbReference type="Gene3D" id="3.40.50.720">
    <property type="entry name" value="NAD(P)-binding Rossmann-like Domain"/>
    <property type="match status" value="1"/>
</dbReference>
<dbReference type="HAMAP" id="MF_01576">
    <property type="entry name" value="THF_DHG_CYH"/>
    <property type="match status" value="1"/>
</dbReference>
<dbReference type="InterPro" id="IPR046346">
    <property type="entry name" value="Aminoacid_DH-like_N_sf"/>
</dbReference>
<dbReference type="InterPro" id="IPR036291">
    <property type="entry name" value="NAD(P)-bd_dom_sf"/>
</dbReference>
<dbReference type="InterPro" id="IPR000672">
    <property type="entry name" value="THF_DH/CycHdrlase"/>
</dbReference>
<dbReference type="InterPro" id="IPR020630">
    <property type="entry name" value="THF_DH/CycHdrlase_cat_dom"/>
</dbReference>
<dbReference type="InterPro" id="IPR020867">
    <property type="entry name" value="THF_DH/CycHdrlase_CS"/>
</dbReference>
<dbReference type="InterPro" id="IPR020631">
    <property type="entry name" value="THF_DH/CycHdrlase_NAD-bd_dom"/>
</dbReference>
<dbReference type="NCBIfam" id="NF008058">
    <property type="entry name" value="PRK10792.1"/>
    <property type="match status" value="1"/>
</dbReference>
<dbReference type="NCBIfam" id="NF010783">
    <property type="entry name" value="PRK14186.1"/>
    <property type="match status" value="1"/>
</dbReference>
<dbReference type="NCBIfam" id="NF010785">
    <property type="entry name" value="PRK14188.1"/>
    <property type="match status" value="1"/>
</dbReference>
<dbReference type="PANTHER" id="PTHR48099:SF5">
    <property type="entry name" value="C-1-TETRAHYDROFOLATE SYNTHASE, CYTOPLASMIC"/>
    <property type="match status" value="1"/>
</dbReference>
<dbReference type="PANTHER" id="PTHR48099">
    <property type="entry name" value="C-1-TETRAHYDROFOLATE SYNTHASE, CYTOPLASMIC-RELATED"/>
    <property type="match status" value="1"/>
</dbReference>
<dbReference type="Pfam" id="PF00763">
    <property type="entry name" value="THF_DHG_CYH"/>
    <property type="match status" value="1"/>
</dbReference>
<dbReference type="Pfam" id="PF02882">
    <property type="entry name" value="THF_DHG_CYH_C"/>
    <property type="match status" value="1"/>
</dbReference>
<dbReference type="PRINTS" id="PR00085">
    <property type="entry name" value="THFDHDRGNASE"/>
</dbReference>
<dbReference type="SUPFAM" id="SSF53223">
    <property type="entry name" value="Aminoacid dehydrogenase-like, N-terminal domain"/>
    <property type="match status" value="1"/>
</dbReference>
<dbReference type="SUPFAM" id="SSF51735">
    <property type="entry name" value="NAD(P)-binding Rossmann-fold domains"/>
    <property type="match status" value="1"/>
</dbReference>
<dbReference type="PROSITE" id="PS00766">
    <property type="entry name" value="THF_DHG_CYH_1"/>
    <property type="match status" value="1"/>
</dbReference>
<dbReference type="PROSITE" id="PS00767">
    <property type="entry name" value="THF_DHG_CYH_2"/>
    <property type="match status" value="1"/>
</dbReference>
<evidence type="ECO:0000255" key="1">
    <source>
        <dbReference type="HAMAP-Rule" id="MF_01576"/>
    </source>
</evidence>
<sequence>MSAEIINGKEIAAEIRREIKQETAQFIAATGVRPGLAVILVGNDPASEVYVRNKGIQAEEVGFLSQIYRLPAQTTQAELLAKIVALNNDPQICGILVQLPLPAHLNAEIVLNTIDPNKDVDGFHPLNIGRLWAGEPCSVPCTPLGCSLILKRYFGDSLAGKKALIIGRSNIVGKPMAALLLQQHATVTIAHSKTPDVPALCRQADIVIAAVGQPELVKGDWIKSGAVVLDVGINRIAVGDKTKLVGDVAFESAKEVAAAITPVPGGIGPMTIACLLKNTLTLAKAIQQSGK</sequence>
<reference key="1">
    <citation type="journal article" date="2007" name="Nat. Biotechnol.">
        <title>Genome sequence and identification of candidate vaccine antigens from the animal pathogen Dichelobacter nodosus.</title>
        <authorList>
            <person name="Myers G.S.A."/>
            <person name="Parker D."/>
            <person name="Al-Hasani K."/>
            <person name="Kennan R.M."/>
            <person name="Seemann T."/>
            <person name="Ren Q."/>
            <person name="Badger J.H."/>
            <person name="Selengut J.D."/>
            <person name="Deboy R.T."/>
            <person name="Tettelin H."/>
            <person name="Boyce J.D."/>
            <person name="McCarl V.P."/>
            <person name="Han X."/>
            <person name="Nelson W.C."/>
            <person name="Madupu R."/>
            <person name="Mohamoud Y."/>
            <person name="Holley T."/>
            <person name="Fedorova N."/>
            <person name="Khouri H."/>
            <person name="Bottomley S.P."/>
            <person name="Whittington R.J."/>
            <person name="Adler B."/>
            <person name="Songer J.G."/>
            <person name="Rood J.I."/>
            <person name="Paulsen I.T."/>
        </authorList>
    </citation>
    <scope>NUCLEOTIDE SEQUENCE [LARGE SCALE GENOMIC DNA]</scope>
    <source>
        <strain>VCS1703A</strain>
    </source>
</reference>
<name>FOLD_DICNV</name>